<name>FAR1_AUSGA</name>
<evidence type="ECO:0000250" key="1">
    <source>
        <dbReference type="UniProtKB" id="P34405"/>
    </source>
</evidence>
<evidence type="ECO:0000255" key="2"/>
<evidence type="ECO:0000269" key="3">
    <source>
    </source>
</evidence>
<evidence type="ECO:0000303" key="4">
    <source>
    </source>
</evidence>
<evidence type="ECO:0000305" key="5"/>
<evidence type="ECO:0000305" key="6">
    <source>
    </source>
</evidence>
<feature type="peptide" id="PRO_0000421475" description="Extended FMRFamide-1" evidence="3">
    <location>
        <begin position="1"/>
        <end position="7"/>
    </location>
</feature>
<feature type="modified residue" description="Leucine amide" evidence="3">
    <location>
        <position position="7"/>
    </location>
</feature>
<feature type="unsure residue" description="L or I" evidence="3">
    <location>
        <position position="5"/>
    </location>
</feature>
<feature type="unsure residue" description="L or I" evidence="3">
    <location>
        <position position="7"/>
    </location>
</feature>
<proteinExistence type="evidence at protein level"/>
<dbReference type="GO" id="GO:0005576">
    <property type="term" value="C:extracellular region"/>
    <property type="evidence" value="ECO:0007669"/>
    <property type="project" value="UniProtKB-SubCell"/>
</dbReference>
<dbReference type="GO" id="GO:0007218">
    <property type="term" value="P:neuropeptide signaling pathway"/>
    <property type="evidence" value="ECO:0007669"/>
    <property type="project" value="UniProtKB-KW"/>
</dbReference>
<sequence>AQSFLRL</sequence>
<comment type="function">
    <text evidence="1">FMRFamides and FMRFamide-like peptides are neuropeptides.</text>
</comment>
<comment type="subcellular location">
    <subcellularLocation>
        <location evidence="6">Secreted</location>
    </subcellularLocation>
</comment>
<comment type="similarity">
    <text evidence="2">Belongs to the FARP (FMRF amide related peptide) family.</text>
</comment>
<keyword id="KW-0027">Amidation</keyword>
<keyword id="KW-0903">Direct protein sequencing</keyword>
<keyword id="KW-0527">Neuropeptide</keyword>
<keyword id="KW-0964">Secreted</keyword>
<organism>
    <name type="scientific">Austrophasma gansbaaiense</name>
    <name type="common">Gladiator</name>
    <name type="synonym">Heel-walker</name>
    <dbReference type="NCBI Taxonomy" id="253136"/>
    <lineage>
        <taxon>Eukaryota</taxon>
        <taxon>Metazoa</taxon>
        <taxon>Ecdysozoa</taxon>
        <taxon>Arthropoda</taxon>
        <taxon>Hexapoda</taxon>
        <taxon>Insecta</taxon>
        <taxon>Pterygota</taxon>
        <taxon>Neoptera</taxon>
        <taxon>Polyneoptera</taxon>
        <taxon>Mantophasmatodea</taxon>
        <taxon>Austrophasmatidae</taxon>
        <taxon>Austrophasma</taxon>
    </lineage>
</organism>
<reference evidence="5" key="1">
    <citation type="journal article" date="2012" name="Syst. Biol.">
        <title>Peptidomics-based phylogeny and biogeography of Mantophasmatodea (Hexapoda).</title>
        <authorList>
            <person name="Predel R."/>
            <person name="Neupert S."/>
            <person name="Huetteroth W."/>
            <person name="Kahnt J."/>
            <person name="Waidelich D."/>
            <person name="Roth S."/>
        </authorList>
    </citation>
    <scope>PROTEIN SEQUENCE</scope>
    <scope>AMIDATION AT LEU-7</scope>
    <source>
        <tissue evidence="3">Thoracic perisympathetic organs</tissue>
    </source>
</reference>
<protein>
    <recommendedName>
        <fullName evidence="4">Extended FMRFamide-1</fullName>
        <shortName evidence="4">FMRFa-1</shortName>
    </recommendedName>
</protein>
<accession>B3A0D9</accession>